<feature type="chain" id="PRO_0000311215" description="Pyridoxal-dependent decarboxylase domain-containing protein 1">
    <location>
        <begin position="1"/>
        <end position="787"/>
    </location>
</feature>
<feature type="region of interest" description="Disordered" evidence="4">
    <location>
        <begin position="29"/>
        <end position="52"/>
    </location>
</feature>
<feature type="region of interest" description="Disordered" evidence="4">
    <location>
        <begin position="683"/>
        <end position="787"/>
    </location>
</feature>
<feature type="compositionally biased region" description="Basic and acidic residues" evidence="4">
    <location>
        <begin position="29"/>
        <end position="41"/>
    </location>
</feature>
<feature type="compositionally biased region" description="Polar residues" evidence="4">
    <location>
        <begin position="685"/>
        <end position="697"/>
    </location>
</feature>
<feature type="compositionally biased region" description="Polar residues" evidence="4">
    <location>
        <begin position="735"/>
        <end position="745"/>
    </location>
</feature>
<feature type="compositionally biased region" description="Basic and acidic residues" evidence="4">
    <location>
        <begin position="774"/>
        <end position="787"/>
    </location>
</feature>
<feature type="modified residue" description="Phosphoserine" evidence="2">
    <location>
        <position position="653"/>
    </location>
</feature>
<feature type="modified residue" description="Phosphothreonine" evidence="3">
    <location>
        <position position="688"/>
    </location>
</feature>
<feature type="modified residue" description="Phosphothreonine" evidence="2">
    <location>
        <position position="692"/>
    </location>
</feature>
<feature type="modified residue" description="Phosphoserine" evidence="2">
    <location>
        <position position="711"/>
    </location>
</feature>
<feature type="modified residue" description="Phosphoserine" evidence="2">
    <location>
        <position position="719"/>
    </location>
</feature>
<feature type="modified residue" description="Phosphoserine" evidence="2">
    <location>
        <position position="723"/>
    </location>
</feature>
<feature type="modified residue" description="Phosphoserine" evidence="3">
    <location>
        <position position="747"/>
    </location>
</feature>
<feature type="modified residue" description="Phosphoserine" evidence="2">
    <location>
        <position position="785"/>
    </location>
</feature>
<keyword id="KW-0210">Decarboxylase</keyword>
<keyword id="KW-0456">Lyase</keyword>
<keyword id="KW-0597">Phosphoprotein</keyword>
<keyword id="KW-0663">Pyridoxal phosphate</keyword>
<keyword id="KW-1185">Reference proteome</keyword>
<evidence type="ECO:0000250" key="1"/>
<evidence type="ECO:0000250" key="2">
    <source>
        <dbReference type="UniProtKB" id="Q6P996"/>
    </source>
</evidence>
<evidence type="ECO:0000250" key="3">
    <source>
        <dbReference type="UniProtKB" id="Q99K01"/>
    </source>
</evidence>
<evidence type="ECO:0000256" key="4">
    <source>
        <dbReference type="SAM" id="MobiDB-lite"/>
    </source>
</evidence>
<evidence type="ECO:0000305" key="5"/>
<reference key="1">
    <citation type="submission" date="2007-07" db="EMBL/GenBank/DDBJ databases">
        <authorList>
            <consortium name="NIH - Mammalian Gene Collection (MGC) project"/>
        </authorList>
    </citation>
    <scope>NUCLEOTIDE SEQUENCE [LARGE SCALE MRNA]</scope>
    <source>
        <strain>Hereford</strain>
        <tissue>Fetal liver</tissue>
    </source>
</reference>
<gene>
    <name type="primary">PDXDC1</name>
</gene>
<protein>
    <recommendedName>
        <fullName>Pyridoxal-dependent decarboxylase domain-containing protein 1</fullName>
        <ecNumber>4.1.1.-</ecNumber>
    </recommendedName>
</protein>
<organism>
    <name type="scientific">Bos taurus</name>
    <name type="common">Bovine</name>
    <dbReference type="NCBI Taxonomy" id="9913"/>
    <lineage>
        <taxon>Eukaryota</taxon>
        <taxon>Metazoa</taxon>
        <taxon>Chordata</taxon>
        <taxon>Craniata</taxon>
        <taxon>Vertebrata</taxon>
        <taxon>Euteleostomi</taxon>
        <taxon>Mammalia</taxon>
        <taxon>Eutheria</taxon>
        <taxon>Laurasiatheria</taxon>
        <taxon>Artiodactyla</taxon>
        <taxon>Ruminantia</taxon>
        <taxon>Pecora</taxon>
        <taxon>Bovidae</taxon>
        <taxon>Bovinae</taxon>
        <taxon>Bos</taxon>
    </lineage>
</organism>
<proteinExistence type="evidence at transcript level"/>
<sequence>MDASLEKKIADPTLAEMGKNLKEAMKMLEDSQRRTEEENGKKLLSGDIPGPLQGSGQDMVSILQLVQNLMHGDEDEQPQSTRIQNIGEQGHISLLGHSLGAYISTLDKEKLRKLTTRILSDTTLWLCRIFRYENGCAYFHEEEREGLAKICRLAIHSRYEDFVVDGFNVLYNRKPVLYLSAAARPGLGQYLCNQLGLPFPCLCRVPCNTVFGSQHQMDVAFLEKLIKDDIERGKLPLLLVANAGTAAVGHTDKIGRLKEVCEQYGIWLHVEGVNLATLALGYVSSSVLAATKCDSMTLTPGPWLGLPAVPAVTLYKHDDPALTLVSGLTSNKPADKLRALPLWLSLQYLGLDGIVERIKHACQLSQRLQESLKKVNHIKILVEDELSSPVVVFRFFQELPGSDPGLNAIPAPSAAASAVGRERHSCDALNRWLGEQLKQLVPMSGLTVMDLEVEGTCVRFSPLMTAAVLGTRGEDVDQLVACVQSKLPVLTCTLQLREEFKQEVEATAGLLYVDDPNWPGIGVVRYEHANDDKSSLKLDPEGEKIHAGLLKKLNELESDLTFKMGPEYKSMKSCIYIGMASDDIDISELVETIAVTAREIEEDSRLLENMTEVVRKGIQEAQVQLQKANEERLLEEGVLRQIPVVGSVLNWFSPVQASQKGRTFNLTAGSLESTEHTYVYKVQGSGVTPPQTPTGTRTKQRLPGQKPFKRSLRGSDAISETSSVGHIEDLEKMEQSSGGQEASEANSHERHPEAPAPPEAEPPGALQDGAQGLQDDRPQVEEPESLR</sequence>
<accession>A7MBC2</accession>
<comment type="cofactor">
    <cofactor evidence="1">
        <name>pyridoxal 5'-phosphate</name>
        <dbReference type="ChEBI" id="CHEBI:597326"/>
    </cofactor>
</comment>
<comment type="similarity">
    <text evidence="5">Belongs to the group II decarboxylase family.</text>
</comment>
<name>PDXD1_BOVIN</name>
<dbReference type="EC" id="4.1.1.-"/>
<dbReference type="EMBL" id="BC151480">
    <property type="protein sequence ID" value="AAI51481.1"/>
    <property type="molecule type" value="mRNA"/>
</dbReference>
<dbReference type="RefSeq" id="NP_001095329.1">
    <property type="nucleotide sequence ID" value="NM_001101859.2"/>
</dbReference>
<dbReference type="SMR" id="A7MBC2"/>
<dbReference type="FunCoup" id="A7MBC2">
    <property type="interactions" value="2717"/>
</dbReference>
<dbReference type="STRING" id="9913.ENSBTAP00000043763"/>
<dbReference type="iPTMnet" id="A7MBC2"/>
<dbReference type="PaxDb" id="9913-ENSBTAP00000043763"/>
<dbReference type="PeptideAtlas" id="A7MBC2"/>
<dbReference type="GeneID" id="505868"/>
<dbReference type="KEGG" id="bta:505868"/>
<dbReference type="CTD" id="23042"/>
<dbReference type="VEuPathDB" id="HostDB:ENSBTAG00000004801"/>
<dbReference type="eggNOG" id="KOG0630">
    <property type="taxonomic scope" value="Eukaryota"/>
</dbReference>
<dbReference type="HOGENOM" id="CLU_014327_0_0_1"/>
<dbReference type="InParanoid" id="A7MBC2"/>
<dbReference type="OMA" id="RLQYACR"/>
<dbReference type="OrthoDB" id="2161780at2759"/>
<dbReference type="TreeFam" id="TF313101"/>
<dbReference type="Proteomes" id="UP000009136">
    <property type="component" value="Chromosome 25"/>
</dbReference>
<dbReference type="Bgee" id="ENSBTAG00000004801">
    <property type="expression patterns" value="Expressed in saliva-secreting gland and 107 other cell types or tissues"/>
</dbReference>
<dbReference type="GO" id="GO:0043231">
    <property type="term" value="C:intracellular membrane-bounded organelle"/>
    <property type="evidence" value="ECO:0000318"/>
    <property type="project" value="GO_Central"/>
</dbReference>
<dbReference type="GO" id="GO:0016831">
    <property type="term" value="F:carboxy-lyase activity"/>
    <property type="evidence" value="ECO:0007669"/>
    <property type="project" value="UniProtKB-KW"/>
</dbReference>
<dbReference type="GO" id="GO:0030170">
    <property type="term" value="F:pyridoxal phosphate binding"/>
    <property type="evidence" value="ECO:0007669"/>
    <property type="project" value="InterPro"/>
</dbReference>
<dbReference type="GO" id="GO:0019752">
    <property type="term" value="P:carboxylic acid metabolic process"/>
    <property type="evidence" value="ECO:0007669"/>
    <property type="project" value="InterPro"/>
</dbReference>
<dbReference type="FunFam" id="3.40.640.10:FF:000036">
    <property type="entry name" value="pyridoxal-dependent decarboxylase domain-containing protein 1 isoform X2"/>
    <property type="match status" value="1"/>
</dbReference>
<dbReference type="FunFam" id="3.90.1150.170:FF:000002">
    <property type="entry name" value="pyridoxal-dependent decarboxylase domain-containing protein 1 isoform X2"/>
    <property type="match status" value="1"/>
</dbReference>
<dbReference type="Gene3D" id="3.90.1150.170">
    <property type="match status" value="1"/>
</dbReference>
<dbReference type="Gene3D" id="3.40.640.10">
    <property type="entry name" value="Type I PLP-dependent aspartate aminotransferase-like (Major domain)"/>
    <property type="match status" value="1"/>
</dbReference>
<dbReference type="InterPro" id="IPR050477">
    <property type="entry name" value="GrpII_AminoAcid_Decarb"/>
</dbReference>
<dbReference type="InterPro" id="IPR055103">
    <property type="entry name" value="PDXDC1-like_2nd"/>
</dbReference>
<dbReference type="InterPro" id="IPR055102">
    <property type="entry name" value="PDXDC1-like_3rd"/>
</dbReference>
<dbReference type="InterPro" id="IPR002129">
    <property type="entry name" value="PyrdxlP-dep_de-COase"/>
</dbReference>
<dbReference type="InterPro" id="IPR015424">
    <property type="entry name" value="PyrdxlP-dep_Trfase"/>
</dbReference>
<dbReference type="InterPro" id="IPR015421">
    <property type="entry name" value="PyrdxlP-dep_Trfase_major"/>
</dbReference>
<dbReference type="PANTHER" id="PTHR42735">
    <property type="match status" value="1"/>
</dbReference>
<dbReference type="PANTHER" id="PTHR42735:SF1">
    <property type="entry name" value="PYRIDOXAL-DEPENDENT DECARBOXYLASE DOMAIN-CONTAINING PROTEIN 1-RELATED"/>
    <property type="match status" value="1"/>
</dbReference>
<dbReference type="Pfam" id="PF22930">
    <property type="entry name" value="PDXDC1-like_cen"/>
    <property type="match status" value="1"/>
</dbReference>
<dbReference type="Pfam" id="PF22937">
    <property type="entry name" value="PDXDC1-like_cen2"/>
    <property type="match status" value="1"/>
</dbReference>
<dbReference type="Pfam" id="PF00282">
    <property type="entry name" value="Pyridoxal_deC"/>
    <property type="match status" value="1"/>
</dbReference>
<dbReference type="SUPFAM" id="SSF53383">
    <property type="entry name" value="PLP-dependent transferases"/>
    <property type="match status" value="1"/>
</dbReference>